<organism>
    <name type="scientific">Pseudoalteromonas translucida (strain TAC 125)</name>
    <dbReference type="NCBI Taxonomy" id="326442"/>
    <lineage>
        <taxon>Bacteria</taxon>
        <taxon>Pseudomonadati</taxon>
        <taxon>Pseudomonadota</taxon>
        <taxon>Gammaproteobacteria</taxon>
        <taxon>Alteromonadales</taxon>
        <taxon>Pseudoalteromonadaceae</taxon>
        <taxon>Pseudoalteromonas</taxon>
    </lineage>
</organism>
<gene>
    <name evidence="1" type="primary">uppP1</name>
    <name type="ordered locus">PSHAa2300</name>
</gene>
<name>UPPP1_PSET1</name>
<protein>
    <recommendedName>
        <fullName evidence="1">Undecaprenyl-diphosphatase 1</fullName>
        <ecNumber evidence="1">3.6.1.27</ecNumber>
    </recommendedName>
    <alternativeName>
        <fullName evidence="1">Bacitracin resistance protein 1</fullName>
    </alternativeName>
    <alternativeName>
        <fullName evidence="1">Undecaprenyl pyrophosphate phosphatase 1</fullName>
    </alternativeName>
</protein>
<keyword id="KW-0046">Antibiotic resistance</keyword>
<keyword id="KW-0997">Cell inner membrane</keyword>
<keyword id="KW-1003">Cell membrane</keyword>
<keyword id="KW-0133">Cell shape</keyword>
<keyword id="KW-0961">Cell wall biogenesis/degradation</keyword>
<keyword id="KW-0378">Hydrolase</keyword>
<keyword id="KW-0472">Membrane</keyword>
<keyword id="KW-0573">Peptidoglycan synthesis</keyword>
<keyword id="KW-1185">Reference proteome</keyword>
<keyword id="KW-0812">Transmembrane</keyword>
<keyword id="KW-1133">Transmembrane helix</keyword>
<feature type="chain" id="PRO_0000227627" description="Undecaprenyl-diphosphatase 1">
    <location>
        <begin position="1"/>
        <end position="266"/>
    </location>
</feature>
<feature type="transmembrane region" description="Helical" evidence="1">
    <location>
        <begin position="1"/>
        <end position="21"/>
    </location>
</feature>
<feature type="transmembrane region" description="Helical" evidence="1">
    <location>
        <begin position="39"/>
        <end position="59"/>
    </location>
</feature>
<feature type="transmembrane region" description="Helical" evidence="1">
    <location>
        <begin position="83"/>
        <end position="103"/>
    </location>
</feature>
<feature type="transmembrane region" description="Helical" evidence="1">
    <location>
        <begin position="113"/>
        <end position="133"/>
    </location>
</feature>
<feature type="transmembrane region" description="Helical" evidence="1">
    <location>
        <begin position="141"/>
        <end position="161"/>
    </location>
</feature>
<feature type="transmembrane region" description="Helical" evidence="1">
    <location>
        <begin position="189"/>
        <end position="209"/>
    </location>
</feature>
<feature type="transmembrane region" description="Helical" evidence="1">
    <location>
        <begin position="218"/>
        <end position="238"/>
    </location>
</feature>
<feature type="transmembrane region" description="Helical" evidence="1">
    <location>
        <begin position="244"/>
        <end position="264"/>
    </location>
</feature>
<accession>Q3IHV1</accession>
<proteinExistence type="inferred from homology"/>
<comment type="function">
    <text evidence="1">Catalyzes the dephosphorylation of undecaprenyl diphosphate (UPP). Confers resistance to bacitracin.</text>
</comment>
<comment type="catalytic activity">
    <reaction evidence="1">
        <text>di-trans,octa-cis-undecaprenyl diphosphate + H2O = di-trans,octa-cis-undecaprenyl phosphate + phosphate + H(+)</text>
        <dbReference type="Rhea" id="RHEA:28094"/>
        <dbReference type="ChEBI" id="CHEBI:15377"/>
        <dbReference type="ChEBI" id="CHEBI:15378"/>
        <dbReference type="ChEBI" id="CHEBI:43474"/>
        <dbReference type="ChEBI" id="CHEBI:58405"/>
        <dbReference type="ChEBI" id="CHEBI:60392"/>
        <dbReference type="EC" id="3.6.1.27"/>
    </reaction>
</comment>
<comment type="subcellular location">
    <subcellularLocation>
        <location evidence="1">Cell inner membrane</location>
        <topology evidence="1">Multi-pass membrane protein</topology>
    </subcellularLocation>
</comment>
<comment type="miscellaneous">
    <text>Bacitracin is thought to be involved in the inhibition of peptidoglycan synthesis by sequestering undecaprenyl diphosphate, thereby reducing the pool of lipid carrier available.</text>
</comment>
<comment type="similarity">
    <text evidence="1">Belongs to the UppP family.</text>
</comment>
<dbReference type="EC" id="3.6.1.27" evidence="1"/>
<dbReference type="EMBL" id="CR954246">
    <property type="protein sequence ID" value="CAI87356.1"/>
    <property type="molecule type" value="Genomic_DNA"/>
</dbReference>
<dbReference type="SMR" id="Q3IHV1"/>
<dbReference type="STRING" id="326442.PSHAa2300"/>
<dbReference type="KEGG" id="pha:PSHAa2300"/>
<dbReference type="PATRIC" id="fig|326442.8.peg.2220"/>
<dbReference type="eggNOG" id="COG1968">
    <property type="taxonomic scope" value="Bacteria"/>
</dbReference>
<dbReference type="HOGENOM" id="CLU_060296_1_0_6"/>
<dbReference type="BioCyc" id="PHAL326442:PSHA_RS11345-MONOMER"/>
<dbReference type="Proteomes" id="UP000006843">
    <property type="component" value="Chromosome I"/>
</dbReference>
<dbReference type="GO" id="GO:0005886">
    <property type="term" value="C:plasma membrane"/>
    <property type="evidence" value="ECO:0007669"/>
    <property type="project" value="UniProtKB-SubCell"/>
</dbReference>
<dbReference type="GO" id="GO:0050380">
    <property type="term" value="F:undecaprenyl-diphosphatase activity"/>
    <property type="evidence" value="ECO:0007669"/>
    <property type="project" value="UniProtKB-UniRule"/>
</dbReference>
<dbReference type="GO" id="GO:0071555">
    <property type="term" value="P:cell wall organization"/>
    <property type="evidence" value="ECO:0007669"/>
    <property type="project" value="UniProtKB-KW"/>
</dbReference>
<dbReference type="GO" id="GO:0009252">
    <property type="term" value="P:peptidoglycan biosynthetic process"/>
    <property type="evidence" value="ECO:0007669"/>
    <property type="project" value="UniProtKB-KW"/>
</dbReference>
<dbReference type="GO" id="GO:0008360">
    <property type="term" value="P:regulation of cell shape"/>
    <property type="evidence" value="ECO:0007669"/>
    <property type="project" value="UniProtKB-KW"/>
</dbReference>
<dbReference type="GO" id="GO:0046677">
    <property type="term" value="P:response to antibiotic"/>
    <property type="evidence" value="ECO:0007669"/>
    <property type="project" value="UniProtKB-UniRule"/>
</dbReference>
<dbReference type="HAMAP" id="MF_01006">
    <property type="entry name" value="Undec_diphosphatase"/>
    <property type="match status" value="1"/>
</dbReference>
<dbReference type="InterPro" id="IPR003824">
    <property type="entry name" value="UppP"/>
</dbReference>
<dbReference type="NCBIfam" id="NF001393">
    <property type="entry name" value="PRK00281.2-4"/>
    <property type="match status" value="1"/>
</dbReference>
<dbReference type="NCBIfam" id="TIGR00753">
    <property type="entry name" value="undec_PP_bacA"/>
    <property type="match status" value="1"/>
</dbReference>
<dbReference type="PANTHER" id="PTHR30622">
    <property type="entry name" value="UNDECAPRENYL-DIPHOSPHATASE"/>
    <property type="match status" value="1"/>
</dbReference>
<dbReference type="PANTHER" id="PTHR30622:SF4">
    <property type="entry name" value="UNDECAPRENYL-DIPHOSPHATASE"/>
    <property type="match status" value="1"/>
</dbReference>
<dbReference type="Pfam" id="PF02673">
    <property type="entry name" value="BacA"/>
    <property type="match status" value="1"/>
</dbReference>
<reference key="1">
    <citation type="journal article" date="2005" name="Genome Res.">
        <title>Coping with cold: the genome of the versatile marine Antarctica bacterium Pseudoalteromonas haloplanktis TAC125.</title>
        <authorList>
            <person name="Medigue C."/>
            <person name="Krin E."/>
            <person name="Pascal G."/>
            <person name="Barbe V."/>
            <person name="Bernsel A."/>
            <person name="Bertin P.N."/>
            <person name="Cheung F."/>
            <person name="Cruveiller S."/>
            <person name="D'Amico S."/>
            <person name="Duilio A."/>
            <person name="Fang G."/>
            <person name="Feller G."/>
            <person name="Ho C."/>
            <person name="Mangenot S."/>
            <person name="Marino G."/>
            <person name="Nilsson J."/>
            <person name="Parrilli E."/>
            <person name="Rocha E.P.C."/>
            <person name="Rouy Z."/>
            <person name="Sekowska A."/>
            <person name="Tutino M.L."/>
            <person name="Vallenet D."/>
            <person name="von Heijne G."/>
            <person name="Danchin A."/>
        </authorList>
    </citation>
    <scope>NUCLEOTIDE SEQUENCE [LARGE SCALE GENOMIC DNA]</scope>
    <source>
        <strain>TAC 125</strain>
    </source>
</reference>
<sequence length="266" mass="29257">MSIIEIIVLALIQGFTEFLPISSSAHLILPSQILGWEDQGLAFDVAVHVGTLIAVVIYFRKEVSSILSAWFKSFGAQGSTDDSKLGWWIILGTIPAAILGLLLKDMIELYLRSAWVIAVTTIIFGLLLWYADAKGKQIKTIYQLNWKTALIIGLAQAVAMIPGTSRSGITMTAGLMLGMNKQSAARFSFLLAIPIISMMGLYYTVELALGDHLVDWSTLLLGVVLSFLSAYVCIYMFLKVIERMGMLPFVIYRLLLGVGLIVFLTL</sequence>
<evidence type="ECO:0000255" key="1">
    <source>
        <dbReference type="HAMAP-Rule" id="MF_01006"/>
    </source>
</evidence>